<gene>
    <name evidence="1" type="primary">atpD</name>
    <name type="ordered locus">LAR_0457</name>
</gene>
<feature type="chain" id="PRO_1000143519" description="ATP synthase subunit beta">
    <location>
        <begin position="1"/>
        <end position="475"/>
    </location>
</feature>
<feature type="binding site" evidence="1">
    <location>
        <begin position="153"/>
        <end position="160"/>
    </location>
    <ligand>
        <name>ATP</name>
        <dbReference type="ChEBI" id="CHEBI:30616"/>
    </ligand>
</feature>
<name>ATPB_LIMRJ</name>
<comment type="function">
    <text evidence="1">Produces ATP from ADP in the presence of a proton gradient across the membrane. The catalytic sites are hosted primarily by the beta subunits.</text>
</comment>
<comment type="catalytic activity">
    <reaction evidence="1">
        <text>ATP + H2O + 4 H(+)(in) = ADP + phosphate + 5 H(+)(out)</text>
        <dbReference type="Rhea" id="RHEA:57720"/>
        <dbReference type="ChEBI" id="CHEBI:15377"/>
        <dbReference type="ChEBI" id="CHEBI:15378"/>
        <dbReference type="ChEBI" id="CHEBI:30616"/>
        <dbReference type="ChEBI" id="CHEBI:43474"/>
        <dbReference type="ChEBI" id="CHEBI:456216"/>
        <dbReference type="EC" id="7.1.2.2"/>
    </reaction>
</comment>
<comment type="subunit">
    <text evidence="1">F-type ATPases have 2 components, CF(1) - the catalytic core - and CF(0) - the membrane proton channel. CF(1) has five subunits: alpha(3), beta(3), gamma(1), delta(1), epsilon(1). CF(0) has three main subunits: a(1), b(2) and c(9-12). The alpha and beta chains form an alternating ring which encloses part of the gamma chain. CF(1) is attached to CF(0) by a central stalk formed by the gamma and epsilon chains, while a peripheral stalk is formed by the delta and b chains.</text>
</comment>
<comment type="subcellular location">
    <subcellularLocation>
        <location evidence="1">Cell membrane</location>
        <topology evidence="1">Peripheral membrane protein</topology>
    </subcellularLocation>
</comment>
<comment type="similarity">
    <text evidence="1">Belongs to the ATPase alpha/beta chains family.</text>
</comment>
<dbReference type="EC" id="7.1.2.2" evidence="1"/>
<dbReference type="EMBL" id="AP007281">
    <property type="protein sequence ID" value="BAG24973.1"/>
    <property type="molecule type" value="Genomic_DNA"/>
</dbReference>
<dbReference type="RefSeq" id="WP_003666573.1">
    <property type="nucleotide sequence ID" value="NC_010609.1"/>
</dbReference>
<dbReference type="SMR" id="B2G691"/>
<dbReference type="GeneID" id="77192078"/>
<dbReference type="KEGG" id="lrf:LAR_0457"/>
<dbReference type="HOGENOM" id="CLU_022398_0_2_9"/>
<dbReference type="GO" id="GO:0005886">
    <property type="term" value="C:plasma membrane"/>
    <property type="evidence" value="ECO:0007669"/>
    <property type="project" value="UniProtKB-SubCell"/>
</dbReference>
<dbReference type="GO" id="GO:0045259">
    <property type="term" value="C:proton-transporting ATP synthase complex"/>
    <property type="evidence" value="ECO:0007669"/>
    <property type="project" value="UniProtKB-KW"/>
</dbReference>
<dbReference type="GO" id="GO:0005524">
    <property type="term" value="F:ATP binding"/>
    <property type="evidence" value="ECO:0007669"/>
    <property type="project" value="UniProtKB-UniRule"/>
</dbReference>
<dbReference type="GO" id="GO:0016887">
    <property type="term" value="F:ATP hydrolysis activity"/>
    <property type="evidence" value="ECO:0007669"/>
    <property type="project" value="InterPro"/>
</dbReference>
<dbReference type="GO" id="GO:0046933">
    <property type="term" value="F:proton-transporting ATP synthase activity, rotational mechanism"/>
    <property type="evidence" value="ECO:0007669"/>
    <property type="project" value="UniProtKB-UniRule"/>
</dbReference>
<dbReference type="CDD" id="cd18110">
    <property type="entry name" value="ATP-synt_F1_beta_C"/>
    <property type="match status" value="1"/>
</dbReference>
<dbReference type="CDD" id="cd18115">
    <property type="entry name" value="ATP-synt_F1_beta_N"/>
    <property type="match status" value="1"/>
</dbReference>
<dbReference type="CDD" id="cd01133">
    <property type="entry name" value="F1-ATPase_beta_CD"/>
    <property type="match status" value="1"/>
</dbReference>
<dbReference type="FunFam" id="1.10.1140.10:FF:000001">
    <property type="entry name" value="ATP synthase subunit beta"/>
    <property type="match status" value="1"/>
</dbReference>
<dbReference type="FunFam" id="2.40.10.170:FF:000005">
    <property type="entry name" value="ATP synthase subunit beta"/>
    <property type="match status" value="1"/>
</dbReference>
<dbReference type="FunFam" id="3.40.50.300:FF:000004">
    <property type="entry name" value="ATP synthase subunit beta"/>
    <property type="match status" value="1"/>
</dbReference>
<dbReference type="Gene3D" id="2.40.10.170">
    <property type="match status" value="1"/>
</dbReference>
<dbReference type="Gene3D" id="1.10.1140.10">
    <property type="entry name" value="Bovine Mitochondrial F1-atpase, Atp Synthase Beta Chain, Chain D, domain 3"/>
    <property type="match status" value="1"/>
</dbReference>
<dbReference type="Gene3D" id="3.40.50.300">
    <property type="entry name" value="P-loop containing nucleotide triphosphate hydrolases"/>
    <property type="match status" value="1"/>
</dbReference>
<dbReference type="HAMAP" id="MF_01347">
    <property type="entry name" value="ATP_synth_beta_bact"/>
    <property type="match status" value="1"/>
</dbReference>
<dbReference type="InterPro" id="IPR003593">
    <property type="entry name" value="AAA+_ATPase"/>
</dbReference>
<dbReference type="InterPro" id="IPR055190">
    <property type="entry name" value="ATP-synt_VA_C"/>
</dbReference>
<dbReference type="InterPro" id="IPR005722">
    <property type="entry name" value="ATP_synth_F1_bsu"/>
</dbReference>
<dbReference type="InterPro" id="IPR020003">
    <property type="entry name" value="ATPase_a/bsu_AS"/>
</dbReference>
<dbReference type="InterPro" id="IPR050053">
    <property type="entry name" value="ATPase_alpha/beta_chains"/>
</dbReference>
<dbReference type="InterPro" id="IPR004100">
    <property type="entry name" value="ATPase_F1/V1/A1_a/bsu_N"/>
</dbReference>
<dbReference type="InterPro" id="IPR036121">
    <property type="entry name" value="ATPase_F1/V1/A1_a/bsu_N_sf"/>
</dbReference>
<dbReference type="InterPro" id="IPR000194">
    <property type="entry name" value="ATPase_F1/V1/A1_a/bsu_nucl-bd"/>
</dbReference>
<dbReference type="InterPro" id="IPR024034">
    <property type="entry name" value="ATPase_F1/V1_b/a_C"/>
</dbReference>
<dbReference type="InterPro" id="IPR027417">
    <property type="entry name" value="P-loop_NTPase"/>
</dbReference>
<dbReference type="NCBIfam" id="TIGR01039">
    <property type="entry name" value="atpD"/>
    <property type="match status" value="1"/>
</dbReference>
<dbReference type="PANTHER" id="PTHR15184">
    <property type="entry name" value="ATP SYNTHASE"/>
    <property type="match status" value="1"/>
</dbReference>
<dbReference type="PANTHER" id="PTHR15184:SF71">
    <property type="entry name" value="ATP SYNTHASE SUBUNIT BETA, MITOCHONDRIAL"/>
    <property type="match status" value="1"/>
</dbReference>
<dbReference type="Pfam" id="PF00006">
    <property type="entry name" value="ATP-synt_ab"/>
    <property type="match status" value="1"/>
</dbReference>
<dbReference type="Pfam" id="PF02874">
    <property type="entry name" value="ATP-synt_ab_N"/>
    <property type="match status" value="1"/>
</dbReference>
<dbReference type="Pfam" id="PF22919">
    <property type="entry name" value="ATP-synt_VA_C"/>
    <property type="match status" value="1"/>
</dbReference>
<dbReference type="SMART" id="SM00382">
    <property type="entry name" value="AAA"/>
    <property type="match status" value="1"/>
</dbReference>
<dbReference type="SUPFAM" id="SSF47917">
    <property type="entry name" value="C-terminal domain of alpha and beta subunits of F1 ATP synthase"/>
    <property type="match status" value="1"/>
</dbReference>
<dbReference type="SUPFAM" id="SSF50615">
    <property type="entry name" value="N-terminal domain of alpha and beta subunits of F1 ATP synthase"/>
    <property type="match status" value="1"/>
</dbReference>
<dbReference type="SUPFAM" id="SSF52540">
    <property type="entry name" value="P-loop containing nucleoside triphosphate hydrolases"/>
    <property type="match status" value="1"/>
</dbReference>
<dbReference type="PROSITE" id="PS00152">
    <property type="entry name" value="ATPASE_ALPHA_BETA"/>
    <property type="match status" value="1"/>
</dbReference>
<keyword id="KW-0066">ATP synthesis</keyword>
<keyword id="KW-0067">ATP-binding</keyword>
<keyword id="KW-1003">Cell membrane</keyword>
<keyword id="KW-0139">CF(1)</keyword>
<keyword id="KW-0375">Hydrogen ion transport</keyword>
<keyword id="KW-0406">Ion transport</keyword>
<keyword id="KW-0472">Membrane</keyword>
<keyword id="KW-0547">Nucleotide-binding</keyword>
<keyword id="KW-1278">Translocase</keyword>
<keyword id="KW-0813">Transport</keyword>
<evidence type="ECO:0000255" key="1">
    <source>
        <dbReference type="HAMAP-Rule" id="MF_01347"/>
    </source>
</evidence>
<sequence>MSSGKVLQVIGPVVDVEFPLDEKLPEINDALKIKESDGKTLTTEVALELGDGVVRTIAMDGTDGLQRGMEVENTGASISVPVGDDTLGRVFNVLGEPVDNGPKFGPDAKRMPIHRDAPKYDDLNNATEILETGIKVIDLLAPYVRGGKIGLFGGAGVGKTVLIQELIHNIAQGHNGISVFTGVGERTREGNDMYYEMKASGVLEKTAMVYGQMNEPPGARMRVALTGLTIAEYFRDVKGQDVLLFIDNIFRFTQAGSEVSALLGRIPSAVGYQPTLATEMGQLQERITSTKKGSITSIQAVYVPADDYTDPAPATTFAHLDATTNLERRLTQIGIYPAVDPLASTSTALTPEIVGKEHYEVATQVQHVLQRYHELQDIISILGMDELSDEEKTIVARARRIQNFLSQSFSVASQFTGLPGKYVPLKETIKGFKEILAGKYDDLPEEAFRLVGPIEDVVEKAKKMKAETDEDSSED</sequence>
<organism>
    <name type="scientific">Limosilactobacillus reuteri subsp. reuteri (strain JCM 1112)</name>
    <name type="common">Lactobacillus reuteri</name>
    <dbReference type="NCBI Taxonomy" id="557433"/>
    <lineage>
        <taxon>Bacteria</taxon>
        <taxon>Bacillati</taxon>
        <taxon>Bacillota</taxon>
        <taxon>Bacilli</taxon>
        <taxon>Lactobacillales</taxon>
        <taxon>Lactobacillaceae</taxon>
        <taxon>Limosilactobacillus</taxon>
    </lineage>
</organism>
<reference key="1">
    <citation type="journal article" date="2008" name="DNA Res.">
        <title>Comparative genome analysis of Lactobacillus reuteri and Lactobacillus fermentum reveal a genomic island for reuterin and cobalamin production.</title>
        <authorList>
            <person name="Morita H."/>
            <person name="Toh H."/>
            <person name="Fukuda S."/>
            <person name="Horikawa H."/>
            <person name="Oshima K."/>
            <person name="Suzuki T."/>
            <person name="Murakami M."/>
            <person name="Hisamatsu S."/>
            <person name="Kato Y."/>
            <person name="Takizawa T."/>
            <person name="Fukuoka H."/>
            <person name="Yoshimura T."/>
            <person name="Itoh K."/>
            <person name="O'Sullivan D.J."/>
            <person name="McKay L.L."/>
            <person name="Ohno H."/>
            <person name="Kikuchi J."/>
            <person name="Masaoka T."/>
            <person name="Hattori M."/>
        </authorList>
    </citation>
    <scope>NUCLEOTIDE SEQUENCE [LARGE SCALE GENOMIC DNA]</scope>
    <source>
        <strain>JCM 1112</strain>
    </source>
</reference>
<protein>
    <recommendedName>
        <fullName evidence="1">ATP synthase subunit beta</fullName>
        <ecNumber evidence="1">7.1.2.2</ecNumber>
    </recommendedName>
    <alternativeName>
        <fullName evidence="1">ATP synthase F1 sector subunit beta</fullName>
    </alternativeName>
    <alternativeName>
        <fullName evidence="1">F-ATPase subunit beta</fullName>
    </alternativeName>
</protein>
<accession>B2G691</accession>
<proteinExistence type="inferred from homology"/>